<dbReference type="EMBL" id="AL132978">
    <property type="protein sequence ID" value="CAB62116.1"/>
    <property type="molecule type" value="Genomic_DNA"/>
</dbReference>
<dbReference type="EMBL" id="CP002686">
    <property type="protein sequence ID" value="AEE78624.1"/>
    <property type="molecule type" value="Genomic_DNA"/>
</dbReference>
<dbReference type="EMBL" id="BX822976">
    <property type="status" value="NOT_ANNOTATED_CDS"/>
    <property type="molecule type" value="mRNA"/>
</dbReference>
<dbReference type="PIR" id="T45861">
    <property type="entry name" value="T45861"/>
</dbReference>
<dbReference type="SMR" id="Q9SN10"/>
<dbReference type="BioGRID" id="9488">
    <property type="interactions" value="1"/>
</dbReference>
<dbReference type="FunCoup" id="Q9SN10">
    <property type="interactions" value="1041"/>
</dbReference>
<dbReference type="STRING" id="3702.Q9SN10"/>
<dbReference type="iPTMnet" id="Q9SN10"/>
<dbReference type="PaxDb" id="3702-AT3G50080.1"/>
<dbReference type="ProteomicsDB" id="222499"/>
<dbReference type="EnsemblPlants" id="AT3G50080.1">
    <property type="protein sequence ID" value="AT3G50080.1"/>
    <property type="gene ID" value="AT3G50080"/>
</dbReference>
<dbReference type="Gramene" id="AT3G50080.1">
    <property type="protein sequence ID" value="AT3G50080.1"/>
    <property type="gene ID" value="AT3G50080"/>
</dbReference>
<dbReference type="KEGG" id="ath:AT3G50080"/>
<dbReference type="Araport" id="AT3G50080"/>
<dbReference type="TAIR" id="AT3G50080">
    <property type="gene designation" value="VFB2"/>
</dbReference>
<dbReference type="eggNOG" id="KOG1947">
    <property type="taxonomic scope" value="Eukaryota"/>
</dbReference>
<dbReference type="HOGENOM" id="CLU_016072_4_0_1"/>
<dbReference type="InParanoid" id="Q9SN10"/>
<dbReference type="OMA" id="DCESIGF"/>
<dbReference type="PhylomeDB" id="Q9SN10"/>
<dbReference type="PRO" id="PR:Q9SN10"/>
<dbReference type="Proteomes" id="UP000006548">
    <property type="component" value="Chromosome 3"/>
</dbReference>
<dbReference type="ExpressionAtlas" id="Q9SN10">
    <property type="expression patterns" value="baseline and differential"/>
</dbReference>
<dbReference type="GO" id="GO:0005737">
    <property type="term" value="C:cytoplasm"/>
    <property type="evidence" value="ECO:0000314"/>
    <property type="project" value="TAIR"/>
</dbReference>
<dbReference type="GO" id="GO:0004842">
    <property type="term" value="F:ubiquitin-protein transferase activity"/>
    <property type="evidence" value="ECO:0000250"/>
    <property type="project" value="TAIR"/>
</dbReference>
<dbReference type="CDD" id="cd22159">
    <property type="entry name" value="F-box_AtTIR1-like"/>
    <property type="match status" value="1"/>
</dbReference>
<dbReference type="FunFam" id="3.80.10.10:FF:000449">
    <property type="entry name" value="F-box protein SKIP2"/>
    <property type="match status" value="1"/>
</dbReference>
<dbReference type="FunFam" id="1.20.1280.50:FF:000005">
    <property type="entry name" value="F-box/LRR-repeat protein 3 isoform X1"/>
    <property type="match status" value="1"/>
</dbReference>
<dbReference type="Gene3D" id="1.20.1280.50">
    <property type="match status" value="1"/>
</dbReference>
<dbReference type="Gene3D" id="3.80.10.10">
    <property type="entry name" value="Ribonuclease Inhibitor"/>
    <property type="match status" value="1"/>
</dbReference>
<dbReference type="InterPro" id="IPR036047">
    <property type="entry name" value="F-box-like_dom_sf"/>
</dbReference>
<dbReference type="InterPro" id="IPR001810">
    <property type="entry name" value="F-box_dom"/>
</dbReference>
<dbReference type="InterPro" id="IPR006553">
    <property type="entry name" value="Leu-rich_rpt_Cys-con_subtyp"/>
</dbReference>
<dbReference type="InterPro" id="IPR032675">
    <property type="entry name" value="LRR_dom_sf"/>
</dbReference>
<dbReference type="InterPro" id="IPR055411">
    <property type="entry name" value="LRR_FXL15/At3g58940/PEG3-like"/>
</dbReference>
<dbReference type="PANTHER" id="PTHR13318:SF262">
    <property type="entry name" value="F-BOX_LRR-REPEAT PROTEIN 16"/>
    <property type="match status" value="1"/>
</dbReference>
<dbReference type="PANTHER" id="PTHR13318">
    <property type="entry name" value="PARTNER OF PAIRED, ISOFORM B-RELATED"/>
    <property type="match status" value="1"/>
</dbReference>
<dbReference type="Pfam" id="PF00646">
    <property type="entry name" value="F-box"/>
    <property type="match status" value="1"/>
</dbReference>
<dbReference type="Pfam" id="PF24758">
    <property type="entry name" value="LRR_At5g56370"/>
    <property type="match status" value="1"/>
</dbReference>
<dbReference type="SMART" id="SM00256">
    <property type="entry name" value="FBOX"/>
    <property type="match status" value="1"/>
</dbReference>
<dbReference type="SMART" id="SM00367">
    <property type="entry name" value="LRR_CC"/>
    <property type="match status" value="6"/>
</dbReference>
<dbReference type="SUPFAM" id="SSF81383">
    <property type="entry name" value="F-box domain"/>
    <property type="match status" value="1"/>
</dbReference>
<dbReference type="SUPFAM" id="SSF52047">
    <property type="entry name" value="RNI-like"/>
    <property type="match status" value="1"/>
</dbReference>
<sequence>MGQAPSSPAEPNVRDTSLCLWSPEFLDCESIGFEDGDYDFTANLPDDCLAHIFQFLSAGDRKRCSLVSKRWLLVDGQNRHRLSLDAKSEILPFLPCIFNRFDSVTKLALRCDRRSFSLSDEALFIVSIRCSNLIRVKLRGCREITDLGMESFARNCKSLRKLSCGSCTFGAKGINAMLEHCKVLEELSLKRIRGLHELAEPIKLSLSASLRSVFLKELVNGQVFGSLVATRTLKKVKIIRCLGNWDRVFEMNGNGNSSLTEIRLERLQVTDIGLFGISKCSNLETLHIVKTPDCSNLGLASVVERCKLLRKLHIDGWRVKRIGDQGLMSVAKHCLNLQELVLIGVDATYMSLSAIASNCKKLERLALCGSGTIGDAEIGCIAEKCVTLRKFCIKGCLISDVGVQALALGCPKLVKLKVKKCSLVTGEVREWLRERRMTLVVSMDDDETNGVGLVDGGDQRVLETVVEEEAPPVIDGDGGLGVAGGGRLGLAILKTKLGLLAGRNLVACTLRRWSQSEATSSI</sequence>
<comment type="sequence caution" evidence="1">
    <conflict type="frameshift">
        <sequence resource="EMBL" id="BX822976"/>
    </conflict>
</comment>
<feature type="chain" id="PRO_0000272256" description="F-box/LRR-repeat protein 16">
    <location>
        <begin position="1"/>
        <end position="522"/>
    </location>
</feature>
<feature type="domain" description="F-box">
    <location>
        <begin position="38"/>
        <end position="84"/>
    </location>
</feature>
<feature type="repeat" description="LRR 1">
    <location>
        <begin position="115"/>
        <end position="140"/>
    </location>
</feature>
<feature type="repeat" description="LRR 2">
    <location>
        <begin position="141"/>
        <end position="166"/>
    </location>
</feature>
<feature type="repeat" description="LRR 3">
    <location>
        <begin position="169"/>
        <end position="191"/>
    </location>
</feature>
<feature type="repeat" description="LRR 4">
    <location>
        <begin position="266"/>
        <end position="290"/>
    </location>
</feature>
<feature type="repeat" description="LRR 5">
    <location>
        <begin position="291"/>
        <end position="316"/>
    </location>
</feature>
<feature type="repeat" description="LRR 6">
    <location>
        <begin position="319"/>
        <end position="344"/>
    </location>
</feature>
<feature type="repeat" description="LRR 7">
    <location>
        <begin position="348"/>
        <end position="369"/>
    </location>
</feature>
<feature type="repeat" description="LRR 8">
    <location>
        <begin position="370"/>
        <end position="393"/>
    </location>
</feature>
<feature type="repeat" description="LRR 9">
    <location>
        <begin position="395"/>
        <end position="420"/>
    </location>
</feature>
<feature type="repeat" description="LRR 10">
    <location>
        <begin position="421"/>
        <end position="447"/>
    </location>
</feature>
<feature type="sequence conflict" description="In Ref. 3; BX822976." evidence="1" ref="3">
    <original>S</original>
    <variation>F</variation>
    <location>
        <position position="166"/>
    </location>
</feature>
<feature type="sequence conflict" description="In Ref. 3; BX822976." evidence="1" ref="3">
    <original>L</original>
    <variation>F</variation>
    <location>
        <position position="352"/>
    </location>
</feature>
<feature type="sequence conflict" description="In Ref. 3; BX822976." evidence="1" ref="3">
    <original>G</original>
    <variation>E</variation>
    <location>
        <position position="481"/>
    </location>
</feature>
<protein>
    <recommendedName>
        <fullName>F-box/LRR-repeat protein 16</fullName>
    </recommendedName>
</protein>
<name>FBL16_ARATH</name>
<evidence type="ECO:0000305" key="1"/>
<reference key="1">
    <citation type="journal article" date="2000" name="Nature">
        <title>Sequence and analysis of chromosome 3 of the plant Arabidopsis thaliana.</title>
        <authorList>
            <person name="Salanoubat M."/>
            <person name="Lemcke K."/>
            <person name="Rieger M."/>
            <person name="Ansorge W."/>
            <person name="Unseld M."/>
            <person name="Fartmann B."/>
            <person name="Valle G."/>
            <person name="Bloecker H."/>
            <person name="Perez-Alonso M."/>
            <person name="Obermaier B."/>
            <person name="Delseny M."/>
            <person name="Boutry M."/>
            <person name="Grivell L.A."/>
            <person name="Mache R."/>
            <person name="Puigdomenech P."/>
            <person name="De Simone V."/>
            <person name="Choisne N."/>
            <person name="Artiguenave F."/>
            <person name="Robert C."/>
            <person name="Brottier P."/>
            <person name="Wincker P."/>
            <person name="Cattolico L."/>
            <person name="Weissenbach J."/>
            <person name="Saurin W."/>
            <person name="Quetier F."/>
            <person name="Schaefer M."/>
            <person name="Mueller-Auer S."/>
            <person name="Gabel C."/>
            <person name="Fuchs M."/>
            <person name="Benes V."/>
            <person name="Wurmbach E."/>
            <person name="Drzonek H."/>
            <person name="Erfle H."/>
            <person name="Jordan N."/>
            <person name="Bangert S."/>
            <person name="Wiedelmann R."/>
            <person name="Kranz H."/>
            <person name="Voss H."/>
            <person name="Holland R."/>
            <person name="Brandt P."/>
            <person name="Nyakatura G."/>
            <person name="Vezzi A."/>
            <person name="D'Angelo M."/>
            <person name="Pallavicini A."/>
            <person name="Toppo S."/>
            <person name="Simionati B."/>
            <person name="Conrad A."/>
            <person name="Hornischer K."/>
            <person name="Kauer G."/>
            <person name="Loehnert T.-H."/>
            <person name="Nordsiek G."/>
            <person name="Reichelt J."/>
            <person name="Scharfe M."/>
            <person name="Schoen O."/>
            <person name="Bargues M."/>
            <person name="Terol J."/>
            <person name="Climent J."/>
            <person name="Navarro P."/>
            <person name="Collado C."/>
            <person name="Perez-Perez A."/>
            <person name="Ottenwaelder B."/>
            <person name="Duchemin D."/>
            <person name="Cooke R."/>
            <person name="Laudie M."/>
            <person name="Berger-Llauro C."/>
            <person name="Purnelle B."/>
            <person name="Masuy D."/>
            <person name="de Haan M."/>
            <person name="Maarse A.C."/>
            <person name="Alcaraz J.-P."/>
            <person name="Cottet A."/>
            <person name="Casacuberta E."/>
            <person name="Monfort A."/>
            <person name="Argiriou A."/>
            <person name="Flores M."/>
            <person name="Liguori R."/>
            <person name="Vitale D."/>
            <person name="Mannhaupt G."/>
            <person name="Haase D."/>
            <person name="Schoof H."/>
            <person name="Rudd S."/>
            <person name="Zaccaria P."/>
            <person name="Mewes H.-W."/>
            <person name="Mayer K.F.X."/>
            <person name="Kaul S."/>
            <person name="Town C.D."/>
            <person name="Koo H.L."/>
            <person name="Tallon L.J."/>
            <person name="Jenkins J."/>
            <person name="Rooney T."/>
            <person name="Rizzo M."/>
            <person name="Walts A."/>
            <person name="Utterback T."/>
            <person name="Fujii C.Y."/>
            <person name="Shea T.P."/>
            <person name="Creasy T.H."/>
            <person name="Haas B."/>
            <person name="Maiti R."/>
            <person name="Wu D."/>
            <person name="Peterson J."/>
            <person name="Van Aken S."/>
            <person name="Pai G."/>
            <person name="Militscher J."/>
            <person name="Sellers P."/>
            <person name="Gill J.E."/>
            <person name="Feldblyum T.V."/>
            <person name="Preuss D."/>
            <person name="Lin X."/>
            <person name="Nierman W.C."/>
            <person name="Salzberg S.L."/>
            <person name="White O."/>
            <person name="Venter J.C."/>
            <person name="Fraser C.M."/>
            <person name="Kaneko T."/>
            <person name="Nakamura Y."/>
            <person name="Sato S."/>
            <person name="Kato T."/>
            <person name="Asamizu E."/>
            <person name="Sasamoto S."/>
            <person name="Kimura T."/>
            <person name="Idesawa K."/>
            <person name="Kawashima K."/>
            <person name="Kishida Y."/>
            <person name="Kiyokawa C."/>
            <person name="Kohara M."/>
            <person name="Matsumoto M."/>
            <person name="Matsuno A."/>
            <person name="Muraki A."/>
            <person name="Nakayama S."/>
            <person name="Nakazaki N."/>
            <person name="Shinpo S."/>
            <person name="Takeuchi C."/>
            <person name="Wada T."/>
            <person name="Watanabe A."/>
            <person name="Yamada M."/>
            <person name="Yasuda M."/>
            <person name="Tabata S."/>
        </authorList>
    </citation>
    <scope>NUCLEOTIDE SEQUENCE [LARGE SCALE GENOMIC DNA]</scope>
    <source>
        <strain>cv. Columbia</strain>
    </source>
</reference>
<reference key="2">
    <citation type="journal article" date="2017" name="Plant J.">
        <title>Araport11: a complete reannotation of the Arabidopsis thaliana reference genome.</title>
        <authorList>
            <person name="Cheng C.Y."/>
            <person name="Krishnakumar V."/>
            <person name="Chan A.P."/>
            <person name="Thibaud-Nissen F."/>
            <person name="Schobel S."/>
            <person name="Town C.D."/>
        </authorList>
    </citation>
    <scope>GENOME REANNOTATION</scope>
    <source>
        <strain>cv. Columbia</strain>
    </source>
</reference>
<reference key="3">
    <citation type="journal article" date="2004" name="Genome Res.">
        <title>Whole genome sequence comparisons and 'full-length' cDNA sequences: a combined approach to evaluate and improve Arabidopsis genome annotation.</title>
        <authorList>
            <person name="Castelli V."/>
            <person name="Aury J.-M."/>
            <person name="Jaillon O."/>
            <person name="Wincker P."/>
            <person name="Clepet C."/>
            <person name="Menard M."/>
            <person name="Cruaud C."/>
            <person name="Quetier F."/>
            <person name="Scarpelli C."/>
            <person name="Schaechter V."/>
            <person name="Temple G."/>
            <person name="Caboche M."/>
            <person name="Weissenbach J."/>
            <person name="Salanoubat M."/>
        </authorList>
    </citation>
    <scope>NUCLEOTIDE SEQUENCE [LARGE SCALE MRNA]</scope>
    <source>
        <strain>cv. Columbia</strain>
    </source>
</reference>
<reference key="4">
    <citation type="journal article" date="2000" name="Trends Plant Sci.">
        <title>F-box proteins in Arabidopsis.</title>
        <authorList>
            <person name="Xiao W."/>
            <person name="Jang J.-C."/>
        </authorList>
    </citation>
    <scope>GENE FAMILY</scope>
    <scope>NOMENCLATURE</scope>
</reference>
<organism>
    <name type="scientific">Arabidopsis thaliana</name>
    <name type="common">Mouse-ear cress</name>
    <dbReference type="NCBI Taxonomy" id="3702"/>
    <lineage>
        <taxon>Eukaryota</taxon>
        <taxon>Viridiplantae</taxon>
        <taxon>Streptophyta</taxon>
        <taxon>Embryophyta</taxon>
        <taxon>Tracheophyta</taxon>
        <taxon>Spermatophyta</taxon>
        <taxon>Magnoliopsida</taxon>
        <taxon>eudicotyledons</taxon>
        <taxon>Gunneridae</taxon>
        <taxon>Pentapetalae</taxon>
        <taxon>rosids</taxon>
        <taxon>malvids</taxon>
        <taxon>Brassicales</taxon>
        <taxon>Brassicaceae</taxon>
        <taxon>Camelineae</taxon>
        <taxon>Arabidopsis</taxon>
    </lineage>
</organism>
<accession>Q9SN10</accession>
<keyword id="KW-0433">Leucine-rich repeat</keyword>
<keyword id="KW-1185">Reference proteome</keyword>
<keyword id="KW-0677">Repeat</keyword>
<proteinExistence type="evidence at transcript level"/>
<gene>
    <name type="primary">FBL16</name>
    <name type="ordered locus">At3g50080</name>
    <name type="ORF">F3A4.160</name>
</gene>